<name>RUBR1_ALCBS</name>
<accession>Q0VTA9</accession>
<keyword id="KW-0963">Cytoplasm</keyword>
<keyword id="KW-0249">Electron transport</keyword>
<keyword id="KW-0408">Iron</keyword>
<keyword id="KW-0479">Metal-binding</keyword>
<keyword id="KW-1185">Reference proteome</keyword>
<keyword id="KW-0813">Transport</keyword>
<reference key="1">
    <citation type="journal article" date="2006" name="Nat. Biotechnol.">
        <title>Genome sequence of the ubiquitous hydrocarbon-degrading marine bacterium Alcanivorax borkumensis.</title>
        <authorList>
            <person name="Schneiker S."/>
            <person name="Martins dos Santos V.A.P."/>
            <person name="Bartels D."/>
            <person name="Bekel T."/>
            <person name="Brecht M."/>
            <person name="Buhrmester J."/>
            <person name="Chernikova T.N."/>
            <person name="Denaro R."/>
            <person name="Ferrer M."/>
            <person name="Gertler C."/>
            <person name="Goesmann A."/>
            <person name="Golyshina O.V."/>
            <person name="Kaminski F."/>
            <person name="Khachane A.N."/>
            <person name="Lang S."/>
            <person name="Linke B."/>
            <person name="McHardy A.C."/>
            <person name="Meyer F."/>
            <person name="Nechitaylo T."/>
            <person name="Puehler A."/>
            <person name="Regenhardt D."/>
            <person name="Rupp O."/>
            <person name="Sabirova J.S."/>
            <person name="Selbitschka W."/>
            <person name="Yakimov M.M."/>
            <person name="Timmis K.N."/>
            <person name="Vorhoelter F.-J."/>
            <person name="Weidner S."/>
            <person name="Kaiser O."/>
            <person name="Golyshin P.N."/>
        </authorList>
    </citation>
    <scope>NUCLEOTIDE SEQUENCE [LARGE SCALE GENOMIC DNA]</scope>
    <source>
        <strain>ATCC 700651 / DSM 11573 / NCIMB 13689 / SK2</strain>
    </source>
</reference>
<proteinExistence type="inferred from homology"/>
<dbReference type="EMBL" id="AM286690">
    <property type="protein sequence ID" value="CAL15611.1"/>
    <property type="molecule type" value="Genomic_DNA"/>
</dbReference>
<dbReference type="SMR" id="Q0VTA9"/>
<dbReference type="STRING" id="393595.ABO_0163"/>
<dbReference type="KEGG" id="abo:ABO_0163"/>
<dbReference type="eggNOG" id="COG1773">
    <property type="taxonomic scope" value="Bacteria"/>
</dbReference>
<dbReference type="HOGENOM" id="CLU_128747_3_3_6"/>
<dbReference type="OrthoDB" id="9800607at2"/>
<dbReference type="UniPathway" id="UPA00191"/>
<dbReference type="Proteomes" id="UP000008871">
    <property type="component" value="Chromosome"/>
</dbReference>
<dbReference type="GO" id="GO:0005737">
    <property type="term" value="C:cytoplasm"/>
    <property type="evidence" value="ECO:0007669"/>
    <property type="project" value="UniProtKB-SubCell"/>
</dbReference>
<dbReference type="GO" id="GO:0009055">
    <property type="term" value="F:electron transfer activity"/>
    <property type="evidence" value="ECO:0007669"/>
    <property type="project" value="InterPro"/>
</dbReference>
<dbReference type="GO" id="GO:0005506">
    <property type="term" value="F:iron ion binding"/>
    <property type="evidence" value="ECO:0007669"/>
    <property type="project" value="InterPro"/>
</dbReference>
<dbReference type="GO" id="GO:0043448">
    <property type="term" value="P:alkane catabolic process"/>
    <property type="evidence" value="ECO:0007669"/>
    <property type="project" value="UniProtKB-UniPathway"/>
</dbReference>
<dbReference type="CDD" id="cd00730">
    <property type="entry name" value="rubredoxin"/>
    <property type="match status" value="1"/>
</dbReference>
<dbReference type="FunFam" id="2.20.28.10:FF:000001">
    <property type="entry name" value="Rubredoxin"/>
    <property type="match status" value="1"/>
</dbReference>
<dbReference type="Gene3D" id="2.20.28.10">
    <property type="match status" value="1"/>
</dbReference>
<dbReference type="InterPro" id="IPR024922">
    <property type="entry name" value="Rubredoxin"/>
</dbReference>
<dbReference type="InterPro" id="IPR024934">
    <property type="entry name" value="Rubredoxin-like_dom"/>
</dbReference>
<dbReference type="InterPro" id="IPR024935">
    <property type="entry name" value="Rubredoxin_dom"/>
</dbReference>
<dbReference type="InterPro" id="IPR050526">
    <property type="entry name" value="Rubredoxin_ET"/>
</dbReference>
<dbReference type="InterPro" id="IPR018527">
    <property type="entry name" value="Rubredoxin_Fe_BS"/>
</dbReference>
<dbReference type="NCBIfam" id="NF045768">
    <property type="entry name" value="RubredRD"/>
    <property type="match status" value="1"/>
</dbReference>
<dbReference type="PANTHER" id="PTHR47627">
    <property type="entry name" value="RUBREDOXIN"/>
    <property type="match status" value="1"/>
</dbReference>
<dbReference type="PANTHER" id="PTHR47627:SF1">
    <property type="entry name" value="RUBREDOXIN-1-RELATED"/>
    <property type="match status" value="1"/>
</dbReference>
<dbReference type="Pfam" id="PF00301">
    <property type="entry name" value="Rubredoxin"/>
    <property type="match status" value="1"/>
</dbReference>
<dbReference type="PIRSF" id="PIRSF000071">
    <property type="entry name" value="Rubredoxin"/>
    <property type="match status" value="1"/>
</dbReference>
<dbReference type="PRINTS" id="PR00163">
    <property type="entry name" value="RUBREDOXIN"/>
</dbReference>
<dbReference type="SUPFAM" id="SSF57802">
    <property type="entry name" value="Rubredoxin-like"/>
    <property type="match status" value="1"/>
</dbReference>
<dbReference type="PROSITE" id="PS00202">
    <property type="entry name" value="RUBREDOXIN"/>
    <property type="match status" value="1"/>
</dbReference>
<dbReference type="PROSITE" id="PS50903">
    <property type="entry name" value="RUBREDOXIN_LIKE"/>
    <property type="match status" value="1"/>
</dbReference>
<organism>
    <name type="scientific">Alcanivorax borkumensis (strain ATCC 700651 / DSM 11573 / NCIMB 13689 / SK2)</name>
    <dbReference type="NCBI Taxonomy" id="393595"/>
    <lineage>
        <taxon>Bacteria</taxon>
        <taxon>Pseudomonadati</taxon>
        <taxon>Pseudomonadota</taxon>
        <taxon>Gammaproteobacteria</taxon>
        <taxon>Oceanospirillales</taxon>
        <taxon>Alcanivoracaceae</taxon>
        <taxon>Alcanivorax</taxon>
    </lineage>
</organism>
<gene>
    <name type="primary">rubA</name>
    <name type="ordered locus">ABO_0163</name>
</gene>
<protein>
    <recommendedName>
        <fullName>Rubredoxin-1</fullName>
        <shortName>Rdxs</shortName>
    </recommendedName>
</protein>
<feature type="chain" id="PRO_0000392229" description="Rubredoxin-1">
    <location>
        <begin position="1"/>
        <end position="54"/>
    </location>
</feature>
<feature type="domain" description="Rubredoxin-like" evidence="2">
    <location>
        <begin position="1"/>
        <end position="52"/>
    </location>
</feature>
<feature type="binding site" evidence="2">
    <location>
        <position position="6"/>
    </location>
    <ligand>
        <name>Fe cation</name>
        <dbReference type="ChEBI" id="CHEBI:24875"/>
    </ligand>
</feature>
<feature type="binding site" evidence="2">
    <location>
        <position position="9"/>
    </location>
    <ligand>
        <name>Fe cation</name>
        <dbReference type="ChEBI" id="CHEBI:24875"/>
    </ligand>
</feature>
<feature type="binding site" evidence="2">
    <location>
        <position position="39"/>
    </location>
    <ligand>
        <name>Fe cation</name>
        <dbReference type="ChEBI" id="CHEBI:24875"/>
    </ligand>
</feature>
<feature type="binding site" evidence="2">
    <location>
        <position position="42"/>
    </location>
    <ligand>
        <name>Fe cation</name>
        <dbReference type="ChEBI" id="CHEBI:24875"/>
    </ligand>
</feature>
<comment type="function">
    <text evidence="1">Involved in the hydrocarbon hydroxylating system, which transfers electrons from NADH to rubredoxin reductase and then through rubredoxin to alkane 1 monooxygenase.</text>
</comment>
<comment type="cofactor">
    <cofactor evidence="1">
        <name>Fe(3+)</name>
        <dbReference type="ChEBI" id="CHEBI:29034"/>
    </cofactor>
    <text evidence="1">Binds 1 Fe(3+) ion per subunit.</text>
</comment>
<comment type="pathway">
    <text>Hydrocarbon metabolism; alkane degradation.</text>
</comment>
<comment type="subcellular location">
    <subcellularLocation>
        <location evidence="1">Cytoplasm</location>
    </subcellularLocation>
</comment>
<comment type="similarity">
    <text evidence="3">Belongs to the rubredoxin family.</text>
</comment>
<evidence type="ECO:0000250" key="1"/>
<evidence type="ECO:0000255" key="2">
    <source>
        <dbReference type="PROSITE-ProRule" id="PRU00241"/>
    </source>
</evidence>
<evidence type="ECO:0000305" key="3"/>
<sequence>MKKWECVVCGFIYDEAEGLPDEGIEPGTAWNNVPEDWVCPDCGVGKDDFEMVEI</sequence>